<protein>
    <recommendedName>
        <fullName evidence="1">ATP-dependent dethiobiotin synthetase BioD</fullName>
        <ecNumber evidence="1">6.3.3.3</ecNumber>
    </recommendedName>
    <alternativeName>
        <fullName evidence="1">DTB synthetase</fullName>
        <shortName evidence="1">DTBS</shortName>
    </alternativeName>
    <alternativeName>
        <fullName evidence="1">Dethiobiotin synthase</fullName>
    </alternativeName>
</protein>
<accession>A6QBZ9</accession>
<keyword id="KW-0067">ATP-binding</keyword>
<keyword id="KW-0093">Biotin biosynthesis</keyword>
<keyword id="KW-0963">Cytoplasm</keyword>
<keyword id="KW-0436">Ligase</keyword>
<keyword id="KW-0460">Magnesium</keyword>
<keyword id="KW-0479">Metal-binding</keyword>
<keyword id="KW-0547">Nucleotide-binding</keyword>
<reference key="1">
    <citation type="journal article" date="2007" name="Proc. Natl. Acad. Sci. U.S.A.">
        <title>Deep-sea vent epsilon-proteobacterial genomes provide insights into emergence of pathogens.</title>
        <authorList>
            <person name="Nakagawa S."/>
            <person name="Takaki Y."/>
            <person name="Shimamura S."/>
            <person name="Reysenbach A.-L."/>
            <person name="Takai K."/>
            <person name="Horikoshi K."/>
        </authorList>
    </citation>
    <scope>NUCLEOTIDE SEQUENCE [LARGE SCALE GENOMIC DNA]</scope>
    <source>
        <strain>NBC37-1</strain>
    </source>
</reference>
<proteinExistence type="inferred from homology"/>
<organism>
    <name type="scientific">Sulfurovum sp. (strain NBC37-1)</name>
    <dbReference type="NCBI Taxonomy" id="387093"/>
    <lineage>
        <taxon>Bacteria</taxon>
        <taxon>Pseudomonadati</taxon>
        <taxon>Campylobacterota</taxon>
        <taxon>Epsilonproteobacteria</taxon>
        <taxon>Campylobacterales</taxon>
        <taxon>Sulfurovaceae</taxon>
        <taxon>Sulfurovum</taxon>
    </lineage>
</organism>
<sequence>MSSLFITATGTNVGKTHTTLKLLDALAAKGRSVGVFKPIETGVLDSAPDATILLESCRKVNRNFEGLKTEDITAYTFPLPAAPFCADTNHKIRIDRILEKYHQLSQLCDILLVEGAGGLMVPVTRDFFMIDLIKELQTRVLLVTPGRLGCINDTLLSMEALKSRNIAFDWCINLYEDAESFTEVTQPFYDAVFPAWWSDKEGMEKFARSL</sequence>
<name>BIOD_SULNB</name>
<gene>
    <name evidence="1" type="primary">bioD</name>
    <name type="ordered locus">SUN_2067</name>
</gene>
<comment type="function">
    <text evidence="1">Catalyzes a mechanistically unusual reaction, the ATP-dependent insertion of CO2 between the N7 and N8 nitrogen atoms of 7,8-diaminopelargonic acid (DAPA, also called 7,8-diammoniononanoate) to form a ureido ring.</text>
</comment>
<comment type="catalytic activity">
    <reaction evidence="1">
        <text>(7R,8S)-7,8-diammoniononanoate + CO2 + ATP = (4R,5S)-dethiobiotin + ADP + phosphate + 3 H(+)</text>
        <dbReference type="Rhea" id="RHEA:15805"/>
        <dbReference type="ChEBI" id="CHEBI:15378"/>
        <dbReference type="ChEBI" id="CHEBI:16526"/>
        <dbReference type="ChEBI" id="CHEBI:30616"/>
        <dbReference type="ChEBI" id="CHEBI:43474"/>
        <dbReference type="ChEBI" id="CHEBI:149469"/>
        <dbReference type="ChEBI" id="CHEBI:149473"/>
        <dbReference type="ChEBI" id="CHEBI:456216"/>
        <dbReference type="EC" id="6.3.3.3"/>
    </reaction>
</comment>
<comment type="cofactor">
    <cofactor evidence="1">
        <name>Mg(2+)</name>
        <dbReference type="ChEBI" id="CHEBI:18420"/>
    </cofactor>
</comment>
<comment type="pathway">
    <text evidence="1">Cofactor biosynthesis; biotin biosynthesis; biotin from 7,8-diaminononanoate: step 1/2.</text>
</comment>
<comment type="subunit">
    <text evidence="1">Homodimer.</text>
</comment>
<comment type="subcellular location">
    <subcellularLocation>
        <location evidence="1">Cytoplasm</location>
    </subcellularLocation>
</comment>
<comment type="similarity">
    <text evidence="1">Belongs to the dethiobiotin synthetase family.</text>
</comment>
<dbReference type="EC" id="6.3.3.3" evidence="1"/>
<dbReference type="EMBL" id="AP009179">
    <property type="protein sequence ID" value="BAF73008.1"/>
    <property type="molecule type" value="Genomic_DNA"/>
</dbReference>
<dbReference type="RefSeq" id="WP_012083832.1">
    <property type="nucleotide sequence ID" value="NC_009663.1"/>
</dbReference>
<dbReference type="SMR" id="A6QBZ9"/>
<dbReference type="STRING" id="387093.SUN_2067"/>
<dbReference type="KEGG" id="sun:SUN_2067"/>
<dbReference type="eggNOG" id="COG0132">
    <property type="taxonomic scope" value="Bacteria"/>
</dbReference>
<dbReference type="HOGENOM" id="CLU_072551_3_2_7"/>
<dbReference type="OrthoDB" id="9802097at2"/>
<dbReference type="UniPathway" id="UPA00078">
    <property type="reaction ID" value="UER00161"/>
</dbReference>
<dbReference type="Proteomes" id="UP000006378">
    <property type="component" value="Chromosome"/>
</dbReference>
<dbReference type="GO" id="GO:0005829">
    <property type="term" value="C:cytosol"/>
    <property type="evidence" value="ECO:0007669"/>
    <property type="project" value="TreeGrafter"/>
</dbReference>
<dbReference type="GO" id="GO:0005524">
    <property type="term" value="F:ATP binding"/>
    <property type="evidence" value="ECO:0007669"/>
    <property type="project" value="UniProtKB-UniRule"/>
</dbReference>
<dbReference type="GO" id="GO:0004141">
    <property type="term" value="F:dethiobiotin synthase activity"/>
    <property type="evidence" value="ECO:0007669"/>
    <property type="project" value="UniProtKB-UniRule"/>
</dbReference>
<dbReference type="GO" id="GO:0000287">
    <property type="term" value="F:magnesium ion binding"/>
    <property type="evidence" value="ECO:0007669"/>
    <property type="project" value="UniProtKB-UniRule"/>
</dbReference>
<dbReference type="GO" id="GO:0009102">
    <property type="term" value="P:biotin biosynthetic process"/>
    <property type="evidence" value="ECO:0007669"/>
    <property type="project" value="UniProtKB-UniRule"/>
</dbReference>
<dbReference type="CDD" id="cd03109">
    <property type="entry name" value="DTBS"/>
    <property type="match status" value="1"/>
</dbReference>
<dbReference type="Gene3D" id="3.40.50.300">
    <property type="entry name" value="P-loop containing nucleotide triphosphate hydrolases"/>
    <property type="match status" value="1"/>
</dbReference>
<dbReference type="HAMAP" id="MF_00336">
    <property type="entry name" value="BioD"/>
    <property type="match status" value="1"/>
</dbReference>
<dbReference type="InterPro" id="IPR004472">
    <property type="entry name" value="DTB_synth_BioD"/>
</dbReference>
<dbReference type="InterPro" id="IPR027417">
    <property type="entry name" value="P-loop_NTPase"/>
</dbReference>
<dbReference type="NCBIfam" id="TIGR00347">
    <property type="entry name" value="bioD"/>
    <property type="match status" value="1"/>
</dbReference>
<dbReference type="PANTHER" id="PTHR43210">
    <property type="entry name" value="DETHIOBIOTIN SYNTHETASE"/>
    <property type="match status" value="1"/>
</dbReference>
<dbReference type="PANTHER" id="PTHR43210:SF5">
    <property type="entry name" value="DETHIOBIOTIN SYNTHETASE"/>
    <property type="match status" value="1"/>
</dbReference>
<dbReference type="Pfam" id="PF13500">
    <property type="entry name" value="AAA_26"/>
    <property type="match status" value="1"/>
</dbReference>
<dbReference type="PIRSF" id="PIRSF006755">
    <property type="entry name" value="DTB_synth"/>
    <property type="match status" value="1"/>
</dbReference>
<dbReference type="SUPFAM" id="SSF52540">
    <property type="entry name" value="P-loop containing nucleoside triphosphate hydrolases"/>
    <property type="match status" value="1"/>
</dbReference>
<feature type="chain" id="PRO_1000019568" description="ATP-dependent dethiobiotin synthetase BioD">
    <location>
        <begin position="1"/>
        <end position="210"/>
    </location>
</feature>
<feature type="active site" evidence="1">
    <location>
        <position position="37"/>
    </location>
</feature>
<feature type="binding site" evidence="1">
    <location>
        <begin position="12"/>
        <end position="17"/>
    </location>
    <ligand>
        <name>ATP</name>
        <dbReference type="ChEBI" id="CHEBI:30616"/>
    </ligand>
</feature>
<feature type="binding site" evidence="1">
    <location>
        <position position="16"/>
    </location>
    <ligand>
        <name>Mg(2+)</name>
        <dbReference type="ChEBI" id="CHEBI:18420"/>
    </ligand>
</feature>
<feature type="binding site" evidence="1">
    <location>
        <position position="41"/>
    </location>
    <ligand>
        <name>substrate</name>
    </ligand>
</feature>
<feature type="binding site" evidence="1">
    <location>
        <begin position="114"/>
        <end position="117"/>
    </location>
    <ligand>
        <name>ATP</name>
        <dbReference type="ChEBI" id="CHEBI:30616"/>
    </ligand>
</feature>
<feature type="binding site" evidence="1">
    <location>
        <position position="114"/>
    </location>
    <ligand>
        <name>Mg(2+)</name>
        <dbReference type="ChEBI" id="CHEBI:18420"/>
    </ligand>
</feature>
<evidence type="ECO:0000255" key="1">
    <source>
        <dbReference type="HAMAP-Rule" id="MF_00336"/>
    </source>
</evidence>